<organism>
    <name type="scientific">Nitratiruptor sp. (strain SB155-2)</name>
    <dbReference type="NCBI Taxonomy" id="387092"/>
    <lineage>
        <taxon>Bacteria</taxon>
        <taxon>Pseudomonadati</taxon>
        <taxon>Campylobacterota</taxon>
        <taxon>Epsilonproteobacteria</taxon>
        <taxon>Nautiliales</taxon>
        <taxon>Nitratiruptoraceae</taxon>
        <taxon>Nitratiruptor</taxon>
    </lineage>
</organism>
<proteinExistence type="inferred from homology"/>
<reference key="1">
    <citation type="journal article" date="2007" name="Proc. Natl. Acad. Sci. U.S.A.">
        <title>Deep-sea vent epsilon-proteobacterial genomes provide insights into emergence of pathogens.</title>
        <authorList>
            <person name="Nakagawa S."/>
            <person name="Takaki Y."/>
            <person name="Shimamura S."/>
            <person name="Reysenbach A.-L."/>
            <person name="Takai K."/>
            <person name="Horikoshi K."/>
        </authorList>
    </citation>
    <scope>NUCLEOTIDE SEQUENCE [LARGE SCALE GENOMIC DNA]</scope>
    <source>
        <strain>SB155-2</strain>
    </source>
</reference>
<protein>
    <recommendedName>
        <fullName evidence="1">ATP-dependent protease subunit HslV</fullName>
        <ecNumber evidence="1">3.4.25.2</ecNumber>
    </recommendedName>
</protein>
<gene>
    <name evidence="1" type="primary">hslV</name>
    <name type="ordered locus">NIS_1000</name>
</gene>
<dbReference type="EC" id="3.4.25.2" evidence="1"/>
<dbReference type="EMBL" id="AP009178">
    <property type="protein sequence ID" value="BAF70110.1"/>
    <property type="molecule type" value="Genomic_DNA"/>
</dbReference>
<dbReference type="RefSeq" id="WP_012082373.1">
    <property type="nucleotide sequence ID" value="NC_009662.1"/>
</dbReference>
<dbReference type="SMR" id="A6Q3Q1"/>
<dbReference type="FunCoup" id="A6Q3Q1">
    <property type="interactions" value="321"/>
</dbReference>
<dbReference type="STRING" id="387092.NIS_1000"/>
<dbReference type="KEGG" id="nis:NIS_1000"/>
<dbReference type="eggNOG" id="COG5405">
    <property type="taxonomic scope" value="Bacteria"/>
</dbReference>
<dbReference type="HOGENOM" id="CLU_093872_1_1_7"/>
<dbReference type="InParanoid" id="A6Q3Q1"/>
<dbReference type="OrthoDB" id="9804884at2"/>
<dbReference type="Proteomes" id="UP000001118">
    <property type="component" value="Chromosome"/>
</dbReference>
<dbReference type="GO" id="GO:0009376">
    <property type="term" value="C:HslUV protease complex"/>
    <property type="evidence" value="ECO:0007669"/>
    <property type="project" value="UniProtKB-UniRule"/>
</dbReference>
<dbReference type="GO" id="GO:0005839">
    <property type="term" value="C:proteasome core complex"/>
    <property type="evidence" value="ECO:0007669"/>
    <property type="project" value="InterPro"/>
</dbReference>
<dbReference type="GO" id="GO:0046872">
    <property type="term" value="F:metal ion binding"/>
    <property type="evidence" value="ECO:0007669"/>
    <property type="project" value="UniProtKB-KW"/>
</dbReference>
<dbReference type="GO" id="GO:0004298">
    <property type="term" value="F:threonine-type endopeptidase activity"/>
    <property type="evidence" value="ECO:0007669"/>
    <property type="project" value="UniProtKB-KW"/>
</dbReference>
<dbReference type="GO" id="GO:0051603">
    <property type="term" value="P:proteolysis involved in protein catabolic process"/>
    <property type="evidence" value="ECO:0007669"/>
    <property type="project" value="InterPro"/>
</dbReference>
<dbReference type="CDD" id="cd01913">
    <property type="entry name" value="protease_HslV"/>
    <property type="match status" value="1"/>
</dbReference>
<dbReference type="Gene3D" id="3.60.20.10">
    <property type="entry name" value="Glutamine Phosphoribosylpyrophosphate, subunit 1, domain 1"/>
    <property type="match status" value="1"/>
</dbReference>
<dbReference type="HAMAP" id="MF_00248">
    <property type="entry name" value="HslV"/>
    <property type="match status" value="1"/>
</dbReference>
<dbReference type="InterPro" id="IPR022281">
    <property type="entry name" value="ATP-dep_Prtase_HsIV_su"/>
</dbReference>
<dbReference type="InterPro" id="IPR029055">
    <property type="entry name" value="Ntn_hydrolases_N"/>
</dbReference>
<dbReference type="InterPro" id="IPR001353">
    <property type="entry name" value="Proteasome_sua/b"/>
</dbReference>
<dbReference type="InterPro" id="IPR023333">
    <property type="entry name" value="Proteasome_suB-type"/>
</dbReference>
<dbReference type="NCBIfam" id="TIGR03692">
    <property type="entry name" value="ATP_dep_HslV"/>
    <property type="match status" value="1"/>
</dbReference>
<dbReference type="NCBIfam" id="NF003964">
    <property type="entry name" value="PRK05456.1"/>
    <property type="match status" value="1"/>
</dbReference>
<dbReference type="PANTHER" id="PTHR32194:SF0">
    <property type="entry name" value="ATP-DEPENDENT PROTEASE SUBUNIT HSLV"/>
    <property type="match status" value="1"/>
</dbReference>
<dbReference type="PANTHER" id="PTHR32194">
    <property type="entry name" value="METALLOPROTEASE TLDD"/>
    <property type="match status" value="1"/>
</dbReference>
<dbReference type="Pfam" id="PF00227">
    <property type="entry name" value="Proteasome"/>
    <property type="match status" value="1"/>
</dbReference>
<dbReference type="PIRSF" id="PIRSF039093">
    <property type="entry name" value="HslV"/>
    <property type="match status" value="1"/>
</dbReference>
<dbReference type="SUPFAM" id="SSF56235">
    <property type="entry name" value="N-terminal nucleophile aminohydrolases (Ntn hydrolases)"/>
    <property type="match status" value="1"/>
</dbReference>
<dbReference type="PROSITE" id="PS51476">
    <property type="entry name" value="PROTEASOME_BETA_2"/>
    <property type="match status" value="1"/>
</dbReference>
<keyword id="KW-0021">Allosteric enzyme</keyword>
<keyword id="KW-0963">Cytoplasm</keyword>
<keyword id="KW-0378">Hydrolase</keyword>
<keyword id="KW-0479">Metal-binding</keyword>
<keyword id="KW-0645">Protease</keyword>
<keyword id="KW-1185">Reference proteome</keyword>
<keyword id="KW-0915">Sodium</keyword>
<keyword id="KW-0888">Threonine protease</keyword>
<name>HSLV_NITSB</name>
<comment type="function">
    <text evidence="1">Protease subunit of a proteasome-like degradation complex believed to be a general protein degrading machinery.</text>
</comment>
<comment type="catalytic activity">
    <reaction evidence="1">
        <text>ATP-dependent cleavage of peptide bonds with broad specificity.</text>
        <dbReference type="EC" id="3.4.25.2"/>
    </reaction>
</comment>
<comment type="activity regulation">
    <text evidence="1">Allosterically activated by HslU binding.</text>
</comment>
<comment type="subunit">
    <text evidence="1">A double ring-shaped homohexamer of HslV is capped on each side by a ring-shaped HslU homohexamer. The assembly of the HslU/HslV complex is dependent on binding of ATP.</text>
</comment>
<comment type="subcellular location">
    <subcellularLocation>
        <location evidence="1">Cytoplasm</location>
    </subcellularLocation>
</comment>
<comment type="similarity">
    <text evidence="1">Belongs to the peptidase T1B family. HslV subfamily.</text>
</comment>
<sequence>MFEATTILGYKGDGIAVIGGDGQVTFGNTVLKGNATKIRTLYNGQILAGFAGSTADAFNLFDMFEKILENKKGDLLKSVIEFSKEWRKDRYLRRLEAMMIVLNTKHIFILSGTGDVVEPEDGKIAAIGSGGNFALSAARALDKHANLDAKTLVEESLKIAGELCIYTNTNIKLLTLEE</sequence>
<feature type="chain" id="PRO_1000012640" description="ATP-dependent protease subunit HslV">
    <location>
        <begin position="1"/>
        <end position="178"/>
    </location>
</feature>
<feature type="active site" evidence="1">
    <location>
        <position position="5"/>
    </location>
</feature>
<feature type="binding site" evidence="1">
    <location>
        <position position="161"/>
    </location>
    <ligand>
        <name>Na(+)</name>
        <dbReference type="ChEBI" id="CHEBI:29101"/>
    </ligand>
</feature>
<feature type="binding site" evidence="1">
    <location>
        <position position="164"/>
    </location>
    <ligand>
        <name>Na(+)</name>
        <dbReference type="ChEBI" id="CHEBI:29101"/>
    </ligand>
</feature>
<feature type="binding site" evidence="1">
    <location>
        <position position="167"/>
    </location>
    <ligand>
        <name>Na(+)</name>
        <dbReference type="ChEBI" id="CHEBI:29101"/>
    </ligand>
</feature>
<evidence type="ECO:0000255" key="1">
    <source>
        <dbReference type="HAMAP-Rule" id="MF_00248"/>
    </source>
</evidence>
<accession>A6Q3Q1</accession>